<dbReference type="EMBL" id="EF115542">
    <property type="protein sequence ID" value="ABK79541.1"/>
    <property type="molecule type" value="Genomic_DNA"/>
</dbReference>
<dbReference type="EMBL" id="EF115542">
    <property type="protein sequence ID" value="ABK79554.1"/>
    <property type="status" value="ALT_SEQ"/>
    <property type="molecule type" value="Genomic_DNA"/>
</dbReference>
<dbReference type="SMR" id="A1E9Q2"/>
<dbReference type="FunCoup" id="A1E9Q2">
    <property type="interactions" value="774"/>
</dbReference>
<dbReference type="STRING" id="4558.A1E9Q2"/>
<dbReference type="KEGG" id="sbi:4549186"/>
<dbReference type="KEGG" id="sbi:4549215"/>
<dbReference type="eggNOG" id="KOG1750">
    <property type="taxonomic scope" value="Eukaryota"/>
</dbReference>
<dbReference type="InParanoid" id="A1E9Q2"/>
<dbReference type="OrthoDB" id="653404at2759"/>
<dbReference type="Proteomes" id="UP000000768">
    <property type="component" value="Chloroplast"/>
</dbReference>
<dbReference type="ExpressionAtlas" id="A1E9Q2">
    <property type="expression patterns" value="baseline"/>
</dbReference>
<dbReference type="GO" id="GO:0009507">
    <property type="term" value="C:chloroplast"/>
    <property type="evidence" value="ECO:0007669"/>
    <property type="project" value="UniProtKB-SubCell"/>
</dbReference>
<dbReference type="GO" id="GO:0005840">
    <property type="term" value="C:ribosome"/>
    <property type="evidence" value="ECO:0000318"/>
    <property type="project" value="GO_Central"/>
</dbReference>
<dbReference type="GO" id="GO:0015935">
    <property type="term" value="C:small ribosomal subunit"/>
    <property type="evidence" value="ECO:0007669"/>
    <property type="project" value="InterPro"/>
</dbReference>
<dbReference type="GO" id="GO:0019843">
    <property type="term" value="F:rRNA binding"/>
    <property type="evidence" value="ECO:0007669"/>
    <property type="project" value="UniProtKB-UniRule"/>
</dbReference>
<dbReference type="GO" id="GO:0003735">
    <property type="term" value="F:structural constituent of ribosome"/>
    <property type="evidence" value="ECO:0000318"/>
    <property type="project" value="GO_Central"/>
</dbReference>
<dbReference type="GO" id="GO:0006412">
    <property type="term" value="P:translation"/>
    <property type="evidence" value="ECO:0000318"/>
    <property type="project" value="GO_Central"/>
</dbReference>
<dbReference type="CDD" id="cd03368">
    <property type="entry name" value="Ribosomal_S12"/>
    <property type="match status" value="1"/>
</dbReference>
<dbReference type="FunFam" id="2.40.50.140:FF:000008">
    <property type="entry name" value="30S ribosomal protein S12, chloroplastic"/>
    <property type="match status" value="1"/>
</dbReference>
<dbReference type="Gene3D" id="2.40.50.140">
    <property type="entry name" value="Nucleic acid-binding proteins"/>
    <property type="match status" value="1"/>
</dbReference>
<dbReference type="HAMAP" id="MF_00403_B">
    <property type="entry name" value="Ribosomal_uS12_B"/>
    <property type="match status" value="1"/>
</dbReference>
<dbReference type="InterPro" id="IPR012340">
    <property type="entry name" value="NA-bd_OB-fold"/>
</dbReference>
<dbReference type="InterPro" id="IPR006032">
    <property type="entry name" value="Ribosomal_uS12"/>
</dbReference>
<dbReference type="InterPro" id="IPR005679">
    <property type="entry name" value="Ribosomal_uS12_bac"/>
</dbReference>
<dbReference type="NCBIfam" id="TIGR00981">
    <property type="entry name" value="rpsL_bact"/>
    <property type="match status" value="1"/>
</dbReference>
<dbReference type="PANTHER" id="PTHR11652">
    <property type="entry name" value="30S RIBOSOMAL PROTEIN S12 FAMILY MEMBER"/>
    <property type="match status" value="1"/>
</dbReference>
<dbReference type="Pfam" id="PF00164">
    <property type="entry name" value="Ribosom_S12_S23"/>
    <property type="match status" value="1"/>
</dbReference>
<dbReference type="PIRSF" id="PIRSF002133">
    <property type="entry name" value="Ribosomal_S12/S23"/>
    <property type="match status" value="1"/>
</dbReference>
<dbReference type="PRINTS" id="PR01034">
    <property type="entry name" value="RIBOSOMALS12"/>
</dbReference>
<dbReference type="SUPFAM" id="SSF50249">
    <property type="entry name" value="Nucleic acid-binding proteins"/>
    <property type="match status" value="1"/>
</dbReference>
<dbReference type="PROSITE" id="PS00055">
    <property type="entry name" value="RIBOSOMAL_S12"/>
    <property type="match status" value="1"/>
</dbReference>
<evidence type="ECO:0000250" key="1"/>
<evidence type="ECO:0000255" key="2">
    <source>
        <dbReference type="HAMAP-Rule" id="MF_00403"/>
    </source>
</evidence>
<evidence type="ECO:0000305" key="3"/>
<comment type="function">
    <text evidence="1">With S4 and S5 plays an important role in translational accuracy. Located at the interface of the 30S and 50S subunits (By similarity).</text>
</comment>
<comment type="subunit">
    <text evidence="1">Part of the 30S ribosomal subunit.</text>
</comment>
<comment type="subcellular location">
    <subcellularLocation>
        <location>Plastid</location>
        <location>Chloroplast</location>
    </subcellularLocation>
</comment>
<comment type="similarity">
    <text evidence="3">Belongs to the universal ribosomal protein uS12 family.</text>
</comment>
<comment type="sequence caution" evidence="3">
    <conflict type="erroneous gene model prediction">
        <sequence resource="EMBL-CDS" id="ABK79554"/>
    </conflict>
</comment>
<protein>
    <recommendedName>
        <fullName evidence="2">Small ribosomal subunit protein uS12cz/uS12cy</fullName>
    </recommendedName>
    <alternativeName>
        <fullName evidence="3">30S ribosomal protein S12, chloroplastic</fullName>
    </alternativeName>
</protein>
<proteinExistence type="inferred from homology"/>
<accession>A1E9Q2</accession>
<accession>A1E9U8</accession>
<gene>
    <name type="primary">rps12-A</name>
</gene>
<gene>
    <name type="primary">rps12-B</name>
</gene>
<reference key="1">
    <citation type="journal article" date="2007" name="Theor. Appl. Genet.">
        <title>Complete chloroplast genome sequences of Hordeum vulgare, Sorghum bicolor and Agrostis stolonifera, and comparative analyses with other grass genomes.</title>
        <authorList>
            <person name="Saski C."/>
            <person name="Lee S.-B."/>
            <person name="Fjellheim S."/>
            <person name="Guda C."/>
            <person name="Jansen R.K."/>
            <person name="Luo H."/>
            <person name="Tomkins J."/>
            <person name="Rognli O.A."/>
            <person name="Daniell H."/>
            <person name="Clarke J.L."/>
        </authorList>
    </citation>
    <scope>NUCLEOTIDE SEQUENCE [LARGE SCALE GENOMIC DNA]</scope>
    <source>
        <strain>cv. BTx623</strain>
    </source>
</reference>
<feature type="chain" id="PRO_0000276632" description="Small ribosomal subunit protein uS12cz/uS12cy">
    <location>
        <begin position="1"/>
        <end position="124"/>
    </location>
</feature>
<keyword id="KW-0150">Chloroplast</keyword>
<keyword id="KW-0934">Plastid</keyword>
<keyword id="KW-1185">Reference proteome</keyword>
<keyword id="KW-0687">Ribonucleoprotein</keyword>
<keyword id="KW-0689">Ribosomal protein</keyword>
<keyword id="KW-0694">RNA-binding</keyword>
<keyword id="KW-0699">rRNA-binding</keyword>
<sequence>MPTVKQLIRNARQPIRNARKSAALKGCPQRRGTCARVYTINPKKPNSALRKVARVRLTSGFEITAYIPGIGHNLQEHSVVLVRGGRVKDLPGVRYRIIRGTLDAVAVKNRQQGRSKYGAKKPKK</sequence>
<geneLocation type="chloroplast"/>
<name>RR12_SORBI</name>
<organism>
    <name type="scientific">Sorghum bicolor</name>
    <name type="common">Sorghum</name>
    <name type="synonym">Sorghum vulgare</name>
    <dbReference type="NCBI Taxonomy" id="4558"/>
    <lineage>
        <taxon>Eukaryota</taxon>
        <taxon>Viridiplantae</taxon>
        <taxon>Streptophyta</taxon>
        <taxon>Embryophyta</taxon>
        <taxon>Tracheophyta</taxon>
        <taxon>Spermatophyta</taxon>
        <taxon>Magnoliopsida</taxon>
        <taxon>Liliopsida</taxon>
        <taxon>Poales</taxon>
        <taxon>Poaceae</taxon>
        <taxon>PACMAD clade</taxon>
        <taxon>Panicoideae</taxon>
        <taxon>Andropogonodae</taxon>
        <taxon>Andropogoneae</taxon>
        <taxon>Sorghinae</taxon>
        <taxon>Sorghum</taxon>
    </lineage>
</organism>